<evidence type="ECO:0000250" key="1"/>
<evidence type="ECO:0000269" key="2">
    <source>
    </source>
</evidence>
<evidence type="ECO:0000305" key="3"/>
<dbReference type="EMBL" id="AM711639">
    <property type="protein sequence ID" value="CAM98327.1"/>
    <property type="status" value="ALT_SEQ"/>
    <property type="molecule type" value="Genomic_DNA"/>
</dbReference>
<dbReference type="RefSeq" id="YP_001430041.1">
    <property type="nucleotide sequence ID" value="NC_009765.1"/>
</dbReference>
<dbReference type="SMR" id="A7M8Z9"/>
<dbReference type="GeneID" id="5536794"/>
<dbReference type="GO" id="GO:0009536">
    <property type="term" value="C:plastid"/>
    <property type="evidence" value="ECO:0007669"/>
    <property type="project" value="UniProtKB-SubCell"/>
</dbReference>
<dbReference type="GO" id="GO:0015935">
    <property type="term" value="C:small ribosomal subunit"/>
    <property type="evidence" value="ECO:0007669"/>
    <property type="project" value="TreeGrafter"/>
</dbReference>
<dbReference type="GO" id="GO:0019843">
    <property type="term" value="F:rRNA binding"/>
    <property type="evidence" value="ECO:0007669"/>
    <property type="project" value="UniProtKB-KW"/>
</dbReference>
<dbReference type="GO" id="GO:0003735">
    <property type="term" value="F:structural constituent of ribosome"/>
    <property type="evidence" value="ECO:0007669"/>
    <property type="project" value="InterPro"/>
</dbReference>
<dbReference type="GO" id="GO:0006412">
    <property type="term" value="P:translation"/>
    <property type="evidence" value="ECO:0007669"/>
    <property type="project" value="InterPro"/>
</dbReference>
<dbReference type="FunFam" id="1.10.287.1480:FF:000001">
    <property type="entry name" value="30S ribosomal protein S14"/>
    <property type="match status" value="1"/>
</dbReference>
<dbReference type="Gene3D" id="1.10.287.1480">
    <property type="match status" value="1"/>
</dbReference>
<dbReference type="HAMAP" id="MF_00537">
    <property type="entry name" value="Ribosomal_uS14_1"/>
    <property type="match status" value="1"/>
</dbReference>
<dbReference type="InterPro" id="IPR001209">
    <property type="entry name" value="Ribosomal_uS14"/>
</dbReference>
<dbReference type="InterPro" id="IPR023036">
    <property type="entry name" value="Ribosomal_uS14_bac/plastid"/>
</dbReference>
<dbReference type="InterPro" id="IPR018271">
    <property type="entry name" value="Ribosomal_uS14_CS"/>
</dbReference>
<dbReference type="NCBIfam" id="NF006477">
    <property type="entry name" value="PRK08881.1"/>
    <property type="match status" value="1"/>
</dbReference>
<dbReference type="PANTHER" id="PTHR19836">
    <property type="entry name" value="30S RIBOSOMAL PROTEIN S14"/>
    <property type="match status" value="1"/>
</dbReference>
<dbReference type="PANTHER" id="PTHR19836:SF19">
    <property type="entry name" value="SMALL RIBOSOMAL SUBUNIT PROTEIN US14M"/>
    <property type="match status" value="1"/>
</dbReference>
<dbReference type="Pfam" id="PF00253">
    <property type="entry name" value="Ribosomal_S14"/>
    <property type="match status" value="1"/>
</dbReference>
<dbReference type="SUPFAM" id="SSF57716">
    <property type="entry name" value="Glucocorticoid receptor-like (DNA-binding domain)"/>
    <property type="match status" value="1"/>
</dbReference>
<dbReference type="PROSITE" id="PS00527">
    <property type="entry name" value="RIBOSOMAL_S14"/>
    <property type="match status" value="1"/>
</dbReference>
<accession>A7M8Z9</accession>
<keyword id="KW-0934">Plastid</keyword>
<keyword id="KW-0687">Ribonucleoprotein</keyword>
<keyword id="KW-0689">Ribosomal protein</keyword>
<keyword id="KW-0691">RNA editing</keyword>
<keyword id="KW-0694">RNA-binding</keyword>
<keyword id="KW-0699">rRNA-binding</keyword>
<sequence>MARKSLIQREKKRKKLEQKYHLIRRSLKQEIHKVSLLSEKREIYVKLQSLPRNSAPTRLRRRCFMTGRPRANYRDFELSGHILREMVETCLLPGAMRSSW</sequence>
<feature type="chain" id="PRO_0000308472" description="Small ribosomal subunit protein uS14c">
    <location>
        <begin position="1"/>
        <end position="100"/>
    </location>
</feature>
<geneLocation type="plastid"/>
<proteinExistence type="evidence at transcript level"/>
<gene>
    <name type="primary">rps14</name>
</gene>
<organism>
    <name type="scientific">Cuscuta gronovii</name>
    <name type="common">Common dodder</name>
    <name type="synonym">Epithymum gronovii</name>
    <dbReference type="NCBI Taxonomy" id="35886"/>
    <lineage>
        <taxon>Eukaryota</taxon>
        <taxon>Viridiplantae</taxon>
        <taxon>Streptophyta</taxon>
        <taxon>Embryophyta</taxon>
        <taxon>Tracheophyta</taxon>
        <taxon>Spermatophyta</taxon>
        <taxon>Magnoliopsida</taxon>
        <taxon>eudicotyledons</taxon>
        <taxon>Gunneridae</taxon>
        <taxon>Pentapetalae</taxon>
        <taxon>asterids</taxon>
        <taxon>lamiids</taxon>
        <taxon>Solanales</taxon>
        <taxon>Convolvulaceae</taxon>
        <taxon>Cuscuteae</taxon>
        <taxon>Cuscuta</taxon>
        <taxon>Cuscuta subgen. Grammica</taxon>
        <taxon>Cuscuta sect. Oxycarpae</taxon>
    </lineage>
</organism>
<name>RR14_CUSGR</name>
<reference key="1">
    <citation type="journal article" date="2007" name="BMC Plant Biol.">
        <title>Complete DNA sequences of the plastid genomes of two parasitic flowering plant species, Cuscuta reflexa and Cuscuta gronovii.</title>
        <authorList>
            <person name="Funk H.T."/>
            <person name="Berg S."/>
            <person name="Krupinska K."/>
            <person name="Maier U.-G."/>
            <person name="Krause K."/>
        </authorList>
    </citation>
    <scope>NUCLEOTIDE SEQUENCE [LARGE SCALE GENOMIC DNA]</scope>
    <scope>RNA EDITING</scope>
</reference>
<comment type="function">
    <text evidence="1">Binds 16S rRNA, required for the assembly of 30S particles.</text>
</comment>
<comment type="subunit">
    <text evidence="1">Part of the 30S ribosomal subunit.</text>
</comment>
<comment type="subcellular location">
    <subcellularLocation>
        <location>Plastid</location>
    </subcellularLocation>
</comment>
<comment type="RNA editing">
    <location>
        <position position="27" evidence="2"/>
    </location>
    <location>
        <position position="50" evidence="2"/>
    </location>
    <text>Editing at position 50 is more efficient in photosynthetically active tissue.</text>
</comment>
<comment type="similarity">
    <text evidence="3">Belongs to the universal ribosomal protein uS14 family.</text>
</comment>
<comment type="caution">
    <text evidence="3">Young tissue from this organism is photosynthetic and contains some thylakoids, although the photosynthetic activity does not exceed the light compensation point.</text>
</comment>
<protein>
    <recommendedName>
        <fullName evidence="3">Small ribosomal subunit protein uS14c</fullName>
    </recommendedName>
    <alternativeName>
        <fullName>Plastid 30S ribosomal protein S14</fullName>
    </alternativeName>
</protein>